<protein>
    <recommendedName>
        <fullName evidence="1">Cilia- and flagella-associated protein HOATZ</fullName>
    </recommendedName>
</protein>
<name>HOATZ_BOVIN</name>
<comment type="function">
    <text evidence="1">Required for motile ciliogenesis and flagellar genesis by mediating the maturation of the glycolytic enzyme ENO4.</text>
</comment>
<comment type="subcellular location">
    <subcellularLocation>
        <location evidence="1">Cytoplasm</location>
    </subcellularLocation>
    <subcellularLocation>
        <location evidence="1">Cell projection</location>
        <location evidence="1">Cilium</location>
    </subcellularLocation>
</comment>
<comment type="similarity">
    <text evidence="3">Belongs to the HOATZ family.</text>
</comment>
<sequence>METRPSSSLSSPEESCEAFPQGLLVFTGSSDRDANLAKQFWIGASMYPHNESQLVLSRGSSQRLPVARPSRSSAPEKTYFQPFFLEESKSRDVTAETLKIQESEEKKKYLQKAKKRDEIIQLLRKQREERILKELISLPHKPKGKVHKAKKVISESDKEDQEEVKALD</sequence>
<accession>Q32P68</accession>
<evidence type="ECO:0000250" key="1">
    <source>
        <dbReference type="UniProtKB" id="Q80Y73"/>
    </source>
</evidence>
<evidence type="ECO:0000256" key="2">
    <source>
        <dbReference type="SAM" id="MobiDB-lite"/>
    </source>
</evidence>
<evidence type="ECO:0000305" key="3"/>
<feature type="chain" id="PRO_0000328994" description="Cilia- and flagella-associated protein HOATZ">
    <location>
        <begin position="1"/>
        <end position="168"/>
    </location>
</feature>
<feature type="region of interest" description="Disordered" evidence="2">
    <location>
        <begin position="142"/>
        <end position="168"/>
    </location>
</feature>
<feature type="compositionally biased region" description="Basic residues" evidence="2">
    <location>
        <begin position="142"/>
        <end position="151"/>
    </location>
</feature>
<gene>
    <name type="primary">HOATZ</name>
</gene>
<keyword id="KW-0966">Cell projection</keyword>
<keyword id="KW-0963">Cytoplasm</keyword>
<keyword id="KW-1185">Reference proteome</keyword>
<dbReference type="EMBL" id="BC108238">
    <property type="protein sequence ID" value="AAI08239.1"/>
    <property type="molecule type" value="mRNA"/>
</dbReference>
<dbReference type="RefSeq" id="NP_001070496.1">
    <property type="nucleotide sequence ID" value="NM_001077028.2"/>
</dbReference>
<dbReference type="RefSeq" id="XP_005215928.1">
    <property type="nucleotide sequence ID" value="XM_005215871.5"/>
</dbReference>
<dbReference type="RefSeq" id="XP_005215929.1">
    <property type="nucleotide sequence ID" value="XM_005215872.5"/>
</dbReference>
<dbReference type="SMR" id="Q32P68"/>
<dbReference type="FunCoup" id="Q32P68">
    <property type="interactions" value="22"/>
</dbReference>
<dbReference type="STRING" id="9913.ENSBTAP00000069629"/>
<dbReference type="PaxDb" id="9913-ENSBTAP00000045643"/>
<dbReference type="GeneID" id="767960"/>
<dbReference type="KEGG" id="bta:767960"/>
<dbReference type="CTD" id="399949"/>
<dbReference type="VEuPathDB" id="HostDB:ENSBTAG00000034338"/>
<dbReference type="eggNOG" id="ENOG502S8UY">
    <property type="taxonomic scope" value="Eukaryota"/>
</dbReference>
<dbReference type="HOGENOM" id="CLU_122904_0_0_1"/>
<dbReference type="InParanoid" id="Q32P68"/>
<dbReference type="OMA" id="TVCSERQ"/>
<dbReference type="OrthoDB" id="10004365at2759"/>
<dbReference type="TreeFam" id="TF328616"/>
<dbReference type="Proteomes" id="UP000009136">
    <property type="component" value="Chromosome 15"/>
</dbReference>
<dbReference type="Bgee" id="ENSBTAG00000034338">
    <property type="expression patterns" value="Expressed in olfactory segment of nasal mucosa and 43 other cell types or tissues"/>
</dbReference>
<dbReference type="GO" id="GO:0005929">
    <property type="term" value="C:cilium"/>
    <property type="evidence" value="ECO:0000250"/>
    <property type="project" value="UniProtKB"/>
</dbReference>
<dbReference type="GO" id="GO:0005737">
    <property type="term" value="C:cytoplasm"/>
    <property type="evidence" value="ECO:0000250"/>
    <property type="project" value="UniProtKB"/>
</dbReference>
<dbReference type="GO" id="GO:0035082">
    <property type="term" value="P:axoneme assembly"/>
    <property type="evidence" value="ECO:0000250"/>
    <property type="project" value="UniProtKB"/>
</dbReference>
<dbReference type="GO" id="GO:0060271">
    <property type="term" value="P:cilium assembly"/>
    <property type="evidence" value="ECO:0000250"/>
    <property type="project" value="UniProtKB"/>
</dbReference>
<dbReference type="GO" id="GO:0030317">
    <property type="term" value="P:flagellated sperm motility"/>
    <property type="evidence" value="ECO:0000250"/>
    <property type="project" value="UniProtKB"/>
</dbReference>
<dbReference type="GO" id="GO:0007283">
    <property type="term" value="P:spermatogenesis"/>
    <property type="evidence" value="ECO:0000250"/>
    <property type="project" value="UniProtKB"/>
</dbReference>
<dbReference type="InterPro" id="IPR040681">
    <property type="entry name" value="HOATZ-like"/>
</dbReference>
<dbReference type="PANTHER" id="PTHR47231:SF1">
    <property type="entry name" value="CILIA- AND FLAGELLA-ASSOCIATED PROTEIN HOATZ"/>
    <property type="match status" value="1"/>
</dbReference>
<dbReference type="PANTHER" id="PTHR47231">
    <property type="entry name" value="UPF0722 PROTEIN C11ORF88"/>
    <property type="match status" value="1"/>
</dbReference>
<dbReference type="Pfam" id="PF17664">
    <property type="entry name" value="HOATZ-like"/>
    <property type="match status" value="1"/>
</dbReference>
<reference key="1">
    <citation type="submission" date="2005-10" db="EMBL/GenBank/DDBJ databases">
        <authorList>
            <consortium name="NIH - Mammalian Gene Collection (MGC) project"/>
        </authorList>
    </citation>
    <scope>NUCLEOTIDE SEQUENCE [LARGE SCALE MRNA]</scope>
    <source>
        <strain>Crossbred X Angus</strain>
        <tissue>Liver</tissue>
    </source>
</reference>
<organism>
    <name type="scientific">Bos taurus</name>
    <name type="common">Bovine</name>
    <dbReference type="NCBI Taxonomy" id="9913"/>
    <lineage>
        <taxon>Eukaryota</taxon>
        <taxon>Metazoa</taxon>
        <taxon>Chordata</taxon>
        <taxon>Craniata</taxon>
        <taxon>Vertebrata</taxon>
        <taxon>Euteleostomi</taxon>
        <taxon>Mammalia</taxon>
        <taxon>Eutheria</taxon>
        <taxon>Laurasiatheria</taxon>
        <taxon>Artiodactyla</taxon>
        <taxon>Ruminantia</taxon>
        <taxon>Pecora</taxon>
        <taxon>Bovidae</taxon>
        <taxon>Bovinae</taxon>
        <taxon>Bos</taxon>
    </lineage>
</organism>
<proteinExistence type="evidence at transcript level"/>